<sequence>MTEAFSAIHELGGIRGIGGIRGIRRSSYWQQKFLYLFLFQDHFYGIVYNSFVNESEYVRNTTIHGLTYGFNFVMLKHLMKKLHQSQSPSILFDELTNQSQFVREILMIASNPILQPRSRDSAGRINEWNGYQSIHSVFPFIEDRIHNPSNYLDITIPHCVHPEILIRICRKHILDISFLHLLRLMLHTSNHFRIPNSSNRVINLFYRFLWNFCTQSIEYCLIHLWKQIYKFQCTPFWFLFDKTEFIRKIQSVSKKSNPRPDRTISRKNCLIHYVRSQNHLILVIDGEGDFESIKDWKILFIILWSKYLHSWLDPCRISVKNLSNNPLSILGYILYTKNDLIKIRIRFFDFSINTSLVIKGFCGIIPIISLIRSLAKEGFCNTSGRPICKLSWTTLTDNEIIYRFDRIMRNIFYYYSGCCKKKGLYQLQYIFRFSCAKTLACRHKSTIRTVWKRYGSNFARNYVVLEGVKSIPSNLWQRESDEKRFWCLTITQTNFLADLLRKSKNIYSVG</sequence>
<organism>
    <name type="scientific">Aneura mirabilis</name>
    <name type="common">Parasitic liverwort</name>
    <name type="synonym">Cryptothallus mirabilis</name>
    <dbReference type="NCBI Taxonomy" id="280810"/>
    <lineage>
        <taxon>Eukaryota</taxon>
        <taxon>Viridiplantae</taxon>
        <taxon>Streptophyta</taxon>
        <taxon>Embryophyta</taxon>
        <taxon>Marchantiophyta</taxon>
        <taxon>Jungermanniopsida</taxon>
        <taxon>Metzgeriidae</taxon>
        <taxon>Metzgeriales</taxon>
        <taxon>Aneuraceae</taxon>
        <taxon>Aneura</taxon>
    </lineage>
</organism>
<accession>B0YPN0</accession>
<dbReference type="EMBL" id="EU043314">
    <property type="protein sequence ID" value="ABS54477.1"/>
    <property type="molecule type" value="Genomic_DNA"/>
</dbReference>
<dbReference type="RefSeq" id="YP_001687216.1">
    <property type="nucleotide sequence ID" value="NC_010359.1"/>
</dbReference>
<dbReference type="GeneID" id="5952160"/>
<dbReference type="GO" id="GO:0009507">
    <property type="term" value="C:chloroplast"/>
    <property type="evidence" value="ECO:0007669"/>
    <property type="project" value="UniProtKB-UniRule"/>
</dbReference>
<dbReference type="GO" id="GO:0003723">
    <property type="term" value="F:RNA binding"/>
    <property type="evidence" value="ECO:0007669"/>
    <property type="project" value="UniProtKB-KW"/>
</dbReference>
<dbReference type="GO" id="GO:0006397">
    <property type="term" value="P:mRNA processing"/>
    <property type="evidence" value="ECO:0007669"/>
    <property type="project" value="UniProtKB-KW"/>
</dbReference>
<dbReference type="GO" id="GO:0008380">
    <property type="term" value="P:RNA splicing"/>
    <property type="evidence" value="ECO:0007669"/>
    <property type="project" value="UniProtKB-UniRule"/>
</dbReference>
<dbReference type="GO" id="GO:0008033">
    <property type="term" value="P:tRNA processing"/>
    <property type="evidence" value="ECO:0007669"/>
    <property type="project" value="UniProtKB-KW"/>
</dbReference>
<dbReference type="HAMAP" id="MF_01390">
    <property type="entry name" value="MatK"/>
    <property type="match status" value="1"/>
</dbReference>
<dbReference type="InterPro" id="IPR024937">
    <property type="entry name" value="Domain_X"/>
</dbReference>
<dbReference type="InterPro" id="IPR002866">
    <property type="entry name" value="Maturase_MatK"/>
</dbReference>
<dbReference type="InterPro" id="IPR024942">
    <property type="entry name" value="Maturase_MatK_N"/>
</dbReference>
<dbReference type="PANTHER" id="PTHR34811">
    <property type="entry name" value="MATURASE K"/>
    <property type="match status" value="1"/>
</dbReference>
<dbReference type="PANTHER" id="PTHR34811:SF1">
    <property type="entry name" value="MATURASE K"/>
    <property type="match status" value="1"/>
</dbReference>
<dbReference type="Pfam" id="PF01348">
    <property type="entry name" value="Intron_maturas2"/>
    <property type="match status" value="1"/>
</dbReference>
<dbReference type="Pfam" id="PF01824">
    <property type="entry name" value="MatK_N"/>
    <property type="match status" value="1"/>
</dbReference>
<proteinExistence type="inferred from homology"/>
<protein>
    <recommendedName>
        <fullName evidence="1">Maturase K</fullName>
    </recommendedName>
    <alternativeName>
        <fullName evidence="1">Intron maturase</fullName>
    </alternativeName>
</protein>
<evidence type="ECO:0000255" key="1">
    <source>
        <dbReference type="HAMAP-Rule" id="MF_01390"/>
    </source>
</evidence>
<gene>
    <name evidence="1" type="primary">matK</name>
</gene>
<geneLocation type="non-photosynthetic plastid"/>
<reference key="1">
    <citation type="journal article" date="2008" name="Mol. Biol. Evol.">
        <title>Functional gene losses occur with minimal size reduction in the plastid genome of the parasitic liverwort Aneura mirabilis.</title>
        <authorList>
            <person name="Wickett N.J."/>
            <person name="Zhang Y."/>
            <person name="Hansen S.K."/>
            <person name="Roper J.M."/>
            <person name="Kuehl J.V."/>
            <person name="Plock S.A."/>
            <person name="Wolf P.G."/>
            <person name="dePamphilis C.W."/>
            <person name="Boore J.L."/>
            <person name="Goffinet B."/>
        </authorList>
    </citation>
    <scope>NUCLEOTIDE SEQUENCE [LARGE SCALE GENOMIC DNA]</scope>
</reference>
<feature type="chain" id="PRO_0000355912" description="Maturase K">
    <location>
        <begin position="1"/>
        <end position="510"/>
    </location>
</feature>
<keyword id="KW-0507">mRNA processing</keyword>
<keyword id="KW-0934">Plastid</keyword>
<keyword id="KW-0694">RNA-binding</keyword>
<keyword id="KW-0819">tRNA processing</keyword>
<comment type="function">
    <text evidence="1">Usually encoded in the trnK tRNA gene intron. Probably assists in splicing its own and other chloroplast group II introns.</text>
</comment>
<comment type="subcellular location">
    <subcellularLocation>
        <location>Plastid</location>
    </subcellularLocation>
</comment>
<comment type="similarity">
    <text evidence="1">Belongs to the intron maturase 2 family. MatK subfamily.</text>
</comment>
<name>MATK_ANEMR</name>